<sequence length="146" mass="16167">MAAYLLAVAILFCIQGWPSGTVQGQVMPFMEVFKRSVCQTRETLVPVLEEHPSEIADLFKPSCATVLRCGGCCSDESLACTAVGKRSVGREILRVDPRKGTSKIEVMQFTEHTDCECRPRSRSGVDSGKRKRNPEEGEPRAKFPFV</sequence>
<keyword id="KW-0903">Direct protein sequencing</keyword>
<keyword id="KW-1015">Disulfide bond</keyword>
<keyword id="KW-0339">Growth factor</keyword>
<keyword id="KW-0873">Pyrrolidone carboxylic acid</keyword>
<keyword id="KW-0964">Secreted</keyword>
<keyword id="KW-0732">Signal</keyword>
<keyword id="KW-0800">Toxin</keyword>
<name>TXVE1_GLOTS</name>
<organism>
    <name type="scientific">Gloydius tsushimaensis</name>
    <name type="common">Tsushima Island pitviper</name>
    <name type="synonym">Agkistrodon tsushimaensis</name>
    <dbReference type="NCBI Taxonomy" id="1170829"/>
    <lineage>
        <taxon>Eukaryota</taxon>
        <taxon>Metazoa</taxon>
        <taxon>Chordata</taxon>
        <taxon>Craniata</taxon>
        <taxon>Vertebrata</taxon>
        <taxon>Euteleostomi</taxon>
        <taxon>Lepidosauria</taxon>
        <taxon>Squamata</taxon>
        <taxon>Bifurcata</taxon>
        <taxon>Unidentata</taxon>
        <taxon>Episquamata</taxon>
        <taxon>Toxicofera</taxon>
        <taxon>Serpentes</taxon>
        <taxon>Colubroidea</taxon>
        <taxon>Viperidae</taxon>
        <taxon>Crotalinae</taxon>
        <taxon>Gloydius</taxon>
    </lineage>
</organism>
<feature type="signal peptide" evidence="3">
    <location>
        <begin position="1"/>
        <end position="24"/>
    </location>
</feature>
<feature type="chain" id="PRO_5004956553" description="Vascular endothelial growth factor isoform GtVF">
    <location>
        <begin position="25"/>
        <end position="146"/>
    </location>
</feature>
<feature type="region of interest" description="Disordered" evidence="4">
    <location>
        <begin position="116"/>
        <end position="146"/>
    </location>
</feature>
<feature type="compositionally biased region" description="Basic and acidic residues" evidence="4">
    <location>
        <begin position="133"/>
        <end position="146"/>
    </location>
</feature>
<feature type="modified residue" description="Pyrrolidone carboxylic acid" evidence="2 8">
    <location>
        <position position="25"/>
    </location>
</feature>
<feature type="disulfide bond" evidence="1">
    <location>
        <begin position="38"/>
        <end position="80"/>
    </location>
</feature>
<feature type="disulfide bond" description="Interchain (with C-72)" evidence="1">
    <location>
        <position position="63"/>
    </location>
</feature>
<feature type="disulfide bond" evidence="1">
    <location>
        <begin position="69"/>
        <end position="115"/>
    </location>
</feature>
<feature type="disulfide bond" description="Interchain (with C-63)" evidence="1">
    <location>
        <position position="72"/>
    </location>
</feature>
<feature type="disulfide bond" evidence="1">
    <location>
        <begin position="73"/>
        <end position="117"/>
    </location>
</feature>
<feature type="sequence conflict" description="In Ref. 1; BAO57712." evidence="7" ref="1">
    <original>F</original>
    <variation>L</variation>
    <location>
        <position position="145"/>
    </location>
</feature>
<dbReference type="EMBL" id="AB829336">
    <property type="protein sequence ID" value="BAO57711.1"/>
    <property type="molecule type" value="mRNA"/>
</dbReference>
<dbReference type="EMBL" id="AB829897">
    <property type="protein sequence ID" value="BAO57712.1"/>
    <property type="molecule type" value="mRNA"/>
</dbReference>
<dbReference type="SMR" id="X5ICI2"/>
<dbReference type="GO" id="GO:0005615">
    <property type="term" value="C:extracellular space"/>
    <property type="evidence" value="ECO:0007669"/>
    <property type="project" value="TreeGrafter"/>
</dbReference>
<dbReference type="GO" id="GO:0016020">
    <property type="term" value="C:membrane"/>
    <property type="evidence" value="ECO:0007669"/>
    <property type="project" value="InterPro"/>
</dbReference>
<dbReference type="GO" id="GO:0042056">
    <property type="term" value="F:chemoattractant activity"/>
    <property type="evidence" value="ECO:0007669"/>
    <property type="project" value="TreeGrafter"/>
</dbReference>
<dbReference type="GO" id="GO:0008083">
    <property type="term" value="F:growth factor activity"/>
    <property type="evidence" value="ECO:0007669"/>
    <property type="project" value="UniProtKB-KW"/>
</dbReference>
<dbReference type="GO" id="GO:0090729">
    <property type="term" value="F:toxin activity"/>
    <property type="evidence" value="ECO:0007669"/>
    <property type="project" value="UniProtKB-KW"/>
</dbReference>
<dbReference type="GO" id="GO:0005172">
    <property type="term" value="F:vascular endothelial growth factor receptor binding"/>
    <property type="evidence" value="ECO:0007669"/>
    <property type="project" value="TreeGrafter"/>
</dbReference>
<dbReference type="GO" id="GO:0050930">
    <property type="term" value="P:induction of positive chemotaxis"/>
    <property type="evidence" value="ECO:0007669"/>
    <property type="project" value="TreeGrafter"/>
</dbReference>
<dbReference type="GO" id="GO:0045766">
    <property type="term" value="P:positive regulation of angiogenesis"/>
    <property type="evidence" value="ECO:0007669"/>
    <property type="project" value="TreeGrafter"/>
</dbReference>
<dbReference type="GO" id="GO:0001938">
    <property type="term" value="P:positive regulation of endothelial cell proliferation"/>
    <property type="evidence" value="ECO:0007669"/>
    <property type="project" value="TreeGrafter"/>
</dbReference>
<dbReference type="GO" id="GO:0060754">
    <property type="term" value="P:positive regulation of mast cell chemotaxis"/>
    <property type="evidence" value="ECO:0007669"/>
    <property type="project" value="TreeGrafter"/>
</dbReference>
<dbReference type="GO" id="GO:0001666">
    <property type="term" value="P:response to hypoxia"/>
    <property type="evidence" value="ECO:0007669"/>
    <property type="project" value="TreeGrafter"/>
</dbReference>
<dbReference type="GO" id="GO:0002040">
    <property type="term" value="P:sprouting angiogenesis"/>
    <property type="evidence" value="ECO:0007669"/>
    <property type="project" value="TreeGrafter"/>
</dbReference>
<dbReference type="GO" id="GO:0048010">
    <property type="term" value="P:vascular endothelial growth factor receptor signaling pathway"/>
    <property type="evidence" value="ECO:0007669"/>
    <property type="project" value="TreeGrafter"/>
</dbReference>
<dbReference type="GO" id="GO:0038084">
    <property type="term" value="P:vascular endothelial growth factor signaling pathway"/>
    <property type="evidence" value="ECO:0007669"/>
    <property type="project" value="TreeGrafter"/>
</dbReference>
<dbReference type="CDD" id="cd00135">
    <property type="entry name" value="PDGF"/>
    <property type="match status" value="1"/>
</dbReference>
<dbReference type="FunFam" id="2.10.90.10:FF:000030">
    <property type="entry name" value="Vascular endothelial growth factor B"/>
    <property type="match status" value="1"/>
</dbReference>
<dbReference type="Gene3D" id="2.10.90.10">
    <property type="entry name" value="Cystine-knot cytokines"/>
    <property type="match status" value="1"/>
</dbReference>
<dbReference type="InterPro" id="IPR029034">
    <property type="entry name" value="Cystine-knot_cytokine"/>
</dbReference>
<dbReference type="InterPro" id="IPR000072">
    <property type="entry name" value="PDGF/VEGF_dom"/>
</dbReference>
<dbReference type="InterPro" id="IPR050507">
    <property type="entry name" value="PDGF/VEGF_growth_factor"/>
</dbReference>
<dbReference type="PANTHER" id="PTHR12025">
    <property type="entry name" value="VASCULAR ENDOTHELIAL GROWTH FACTOR"/>
    <property type="match status" value="1"/>
</dbReference>
<dbReference type="PANTHER" id="PTHR12025:SF5">
    <property type="entry name" value="VASCULAR ENDOTHELIAL GROWTH FACTOR A, LONG FORM"/>
    <property type="match status" value="1"/>
</dbReference>
<dbReference type="Pfam" id="PF00341">
    <property type="entry name" value="PDGF"/>
    <property type="match status" value="1"/>
</dbReference>
<dbReference type="SMART" id="SM00141">
    <property type="entry name" value="PDGF"/>
    <property type="match status" value="1"/>
</dbReference>
<dbReference type="SUPFAM" id="SSF57501">
    <property type="entry name" value="Cystine-knot cytokines"/>
    <property type="match status" value="1"/>
</dbReference>
<dbReference type="PROSITE" id="PS50278">
    <property type="entry name" value="PDGF_2"/>
    <property type="match status" value="1"/>
</dbReference>
<accession>X5ICI2</accession>
<accession>X5IEB3</accession>
<evidence type="ECO:0000250" key="1">
    <source>
        <dbReference type="UniProtKB" id="P67863"/>
    </source>
</evidence>
<evidence type="ECO:0000250" key="2">
    <source>
        <dbReference type="UniProtKB" id="P83942"/>
    </source>
</evidence>
<evidence type="ECO:0000255" key="3"/>
<evidence type="ECO:0000256" key="4">
    <source>
        <dbReference type="SAM" id="MobiDB-lite"/>
    </source>
</evidence>
<evidence type="ECO:0000269" key="5">
    <source>
    </source>
</evidence>
<evidence type="ECO:0000303" key="6">
    <source>
    </source>
</evidence>
<evidence type="ECO:0000305" key="7"/>
<evidence type="ECO:0000305" key="8">
    <source>
    </source>
</evidence>
<evidence type="ECO:0000312" key="9">
    <source>
        <dbReference type="EMBL" id="BAO57711.1"/>
    </source>
</evidence>
<proteinExistence type="evidence at protein level"/>
<protein>
    <recommendedName>
        <fullName evidence="6">Vascular endothelial growth factor isoform GtVF</fullName>
    </recommendedName>
</protein>
<comment type="function">
    <text evidence="2 5">Snake venom VEGFs that may contribute to venom dispersion and prey subjugation by inducing vascular permeability and hypotension. This protein induces an increase in capillary permeability after intradermal injection, in a VEGFR-2 (KDR) dependent manner (PubMed:24857790). In addition, it provokes a drastic hypotensive effect after intravenous injection (By similarity). The hypotension is mediated by nitric oxide (NO), which is produced by VEGF-activated endothelium NO synthase. Also induces angiogenesis in vitro (By similarity). Unlike other crotalid VEGFs, this protein probably interacts with VEGF receptor-2 (KDR) (PubMed:24857790).</text>
</comment>
<comment type="subunit">
    <text evidence="5">Homodimer; disulfide-linked.</text>
</comment>
<comment type="subcellular location">
    <subcellularLocation>
        <location evidence="5">Secreted</location>
    </subcellularLocation>
</comment>
<comment type="tissue specificity">
    <text evidence="8">Expressed by the venom gland.</text>
</comment>
<comment type="similarity">
    <text evidence="7">Belongs to the PDGF/VEGF growth factor family. Snake venom VEGF subfamily.</text>
</comment>
<reference evidence="9" key="1">
    <citation type="journal article" date="2014" name="Toxicon">
        <title>Discovery of a novel vascular endothelial growth factor (VEGF) with no affinity to heparin in Gloydius tsushimaensis venom.</title>
        <authorList>
            <person name="Nakamura H."/>
            <person name="Murakami T."/>
            <person name="Imamura T."/>
            <person name="Toriba M."/>
            <person name="Chijiwa T."/>
            <person name="Ohno M."/>
            <person name="Oda-Ueda N."/>
        </authorList>
    </citation>
    <scope>NUCLEOTIDE SEQUENCE [MRNA]</scope>
    <scope>PROTEIN SEQUENCE OF 26-42</scope>
    <scope>FUNCTION</scope>
    <scope>PROBABLE PYROGLUTAMATE FORMATION AT GLN-25</scope>
    <scope>SUBCELLULAR LOCATION</scope>
    <scope>SUBUNIT</scope>
    <source>
        <tissue>Venom</tissue>
        <tissue>Venom gland</tissue>
    </source>
</reference>